<evidence type="ECO:0000255" key="1">
    <source>
        <dbReference type="HAMAP-Rule" id="MF_00332"/>
    </source>
</evidence>
<organism>
    <name type="scientific">Bartonella bacilliformis (strain ATCC 35685 / KC583 / Herrer 020/F12,63)</name>
    <dbReference type="NCBI Taxonomy" id="360095"/>
    <lineage>
        <taxon>Bacteria</taxon>
        <taxon>Pseudomonadati</taxon>
        <taxon>Pseudomonadota</taxon>
        <taxon>Alphaproteobacteria</taxon>
        <taxon>Hyphomicrobiales</taxon>
        <taxon>Bartonellaceae</taxon>
        <taxon>Bartonella</taxon>
    </lineage>
</organism>
<protein>
    <recommendedName>
        <fullName evidence="1">Chaperone protein DnaK</fullName>
    </recommendedName>
    <alternativeName>
        <fullName evidence="1">HSP70</fullName>
    </alternativeName>
    <alternativeName>
        <fullName evidence="1">Heat shock 70 kDa protein</fullName>
    </alternativeName>
    <alternativeName>
        <fullName evidence="1">Heat shock protein 70</fullName>
    </alternativeName>
</protein>
<sequence length="631" mass="68104">MAKVIGIDLGTTNSCVAVMDGKNAKVIENSEGARTTPSVVAFTDSGERLVGQPAKRQAVTNPEGTVFAVKRLIGRRFDDPMVEKDKALVPYKIVKGDNGDAWVEENSKKYSPSQISAMILQKMKETAESYLGEKVEQAVITVPAYFNDAQRQATKDAGKIAGLEVLRIINEPTAAALAYGLDKKDGKTIAVYDLGGGTFDISVLEIGDGVFEVKSTNGDTFLGGEDFDMCLVSYFADEFKKEQGIDLKNDKLALQRLKEAAEKAKIELSSSQQTEVNLPFITADQSGPKHLTMKLTRAKFESLVDDLVQRTIEPCKAALKDAGLRAGEIDEVVLVGGMTRMPKIQEVVQNFFGKDPHKGVNPDEVVAMGAAIQGGVLQGDVKDVLLLDVTPLSLGIETLGGVFTRLIERNTTIPTKKSQTFSTADDNQNAVTIRVFQGEREMANDNKLLAQFDLVGIPPAPRGVPQIEVTFDIDANGIVNVSAKDKGTGKEHQIRIQASGGLSDADIENMVKDAESHAAEDKKRRENVEAKNQAEALIHSTEKSLTEYGDKVSAEDKGQIEAAIADLKAVLDGDNSEEVKAKMQKLAEVSMKLGQAMYEASNASAEADAVADSANDDVVDADFEEINDKKK</sequence>
<gene>
    <name evidence="1" type="primary">dnaK</name>
    <name type="ordered locus">BARBAKC583_1328</name>
</gene>
<reference key="1">
    <citation type="submission" date="2006-12" db="EMBL/GenBank/DDBJ databases">
        <authorList>
            <person name="Hendrix L."/>
            <person name="Mohamoud Y."/>
            <person name="Radune D."/>
            <person name="Shvartsbeyn A."/>
            <person name="Daugherty S."/>
            <person name="Dodson R."/>
            <person name="Durkin A.S."/>
            <person name="Harkins D."/>
            <person name="Huot H."/>
            <person name="Kothari S.P."/>
            <person name="Madupu R."/>
            <person name="Li J."/>
            <person name="Nelson W.C."/>
            <person name="Shrivastava S."/>
            <person name="Giglio M.G."/>
            <person name="Haft D."/>
            <person name="Selengut J."/>
            <person name="Fraser-Ligget C."/>
            <person name="Seshadri R."/>
        </authorList>
    </citation>
    <scope>NUCLEOTIDE SEQUENCE [LARGE SCALE GENOMIC DNA]</scope>
    <source>
        <strain>ATCC 35685 / KC583 / Herrer 020/F12,63</strain>
    </source>
</reference>
<dbReference type="EMBL" id="CP000524">
    <property type="protein sequence ID" value="ABM45470.1"/>
    <property type="molecule type" value="Genomic_DNA"/>
</dbReference>
<dbReference type="RefSeq" id="WP_005768116.1">
    <property type="nucleotide sequence ID" value="NC_008783.1"/>
</dbReference>
<dbReference type="SMR" id="A1UUC3"/>
<dbReference type="STRING" id="360095.BARBAKC583_1328"/>
<dbReference type="GeneID" id="4685084"/>
<dbReference type="KEGG" id="bbk:BARBAKC583_1328"/>
<dbReference type="PATRIC" id="fig|360095.6.peg.1300"/>
<dbReference type="eggNOG" id="COG0443">
    <property type="taxonomic scope" value="Bacteria"/>
</dbReference>
<dbReference type="HOGENOM" id="CLU_005965_2_1_5"/>
<dbReference type="OrthoDB" id="9766019at2"/>
<dbReference type="Proteomes" id="UP000000643">
    <property type="component" value="Chromosome"/>
</dbReference>
<dbReference type="GO" id="GO:0005524">
    <property type="term" value="F:ATP binding"/>
    <property type="evidence" value="ECO:0007669"/>
    <property type="project" value="UniProtKB-UniRule"/>
</dbReference>
<dbReference type="GO" id="GO:0140662">
    <property type="term" value="F:ATP-dependent protein folding chaperone"/>
    <property type="evidence" value="ECO:0007669"/>
    <property type="project" value="InterPro"/>
</dbReference>
<dbReference type="GO" id="GO:0051082">
    <property type="term" value="F:unfolded protein binding"/>
    <property type="evidence" value="ECO:0007669"/>
    <property type="project" value="InterPro"/>
</dbReference>
<dbReference type="CDD" id="cd11733">
    <property type="entry name" value="ASKHA_NBD_HSP70_HSPA9"/>
    <property type="match status" value="1"/>
</dbReference>
<dbReference type="FunFam" id="2.60.34.10:FF:000014">
    <property type="entry name" value="Chaperone protein DnaK HSP70"/>
    <property type="match status" value="1"/>
</dbReference>
<dbReference type="FunFam" id="3.30.420.40:FF:000020">
    <property type="entry name" value="Chaperone protein HscA homolog"/>
    <property type="match status" value="1"/>
</dbReference>
<dbReference type="FunFam" id="3.30.30.30:FF:000003">
    <property type="entry name" value="Heat shock protein 9"/>
    <property type="match status" value="1"/>
</dbReference>
<dbReference type="FunFam" id="1.20.1270.10:FF:000001">
    <property type="entry name" value="Molecular chaperone DnaK"/>
    <property type="match status" value="1"/>
</dbReference>
<dbReference type="FunFam" id="3.30.420.40:FF:000004">
    <property type="entry name" value="Molecular chaperone DnaK"/>
    <property type="match status" value="1"/>
</dbReference>
<dbReference type="FunFam" id="3.90.640.10:FF:000003">
    <property type="entry name" value="Molecular chaperone DnaK"/>
    <property type="match status" value="1"/>
</dbReference>
<dbReference type="Gene3D" id="1.20.1270.10">
    <property type="match status" value="1"/>
</dbReference>
<dbReference type="Gene3D" id="3.30.420.40">
    <property type="match status" value="2"/>
</dbReference>
<dbReference type="Gene3D" id="3.90.640.10">
    <property type="entry name" value="Actin, Chain A, domain 4"/>
    <property type="match status" value="1"/>
</dbReference>
<dbReference type="Gene3D" id="2.60.34.10">
    <property type="entry name" value="Substrate Binding Domain Of DNAk, Chain A, domain 1"/>
    <property type="match status" value="1"/>
</dbReference>
<dbReference type="HAMAP" id="MF_00332">
    <property type="entry name" value="DnaK"/>
    <property type="match status" value="1"/>
</dbReference>
<dbReference type="InterPro" id="IPR043129">
    <property type="entry name" value="ATPase_NBD"/>
</dbReference>
<dbReference type="InterPro" id="IPR012725">
    <property type="entry name" value="Chaperone_DnaK"/>
</dbReference>
<dbReference type="InterPro" id="IPR018181">
    <property type="entry name" value="Heat_shock_70_CS"/>
</dbReference>
<dbReference type="InterPro" id="IPR029048">
    <property type="entry name" value="HSP70_C_sf"/>
</dbReference>
<dbReference type="InterPro" id="IPR029047">
    <property type="entry name" value="HSP70_peptide-bd_sf"/>
</dbReference>
<dbReference type="InterPro" id="IPR013126">
    <property type="entry name" value="Hsp_70_fam"/>
</dbReference>
<dbReference type="NCBIfam" id="NF001413">
    <property type="entry name" value="PRK00290.1"/>
    <property type="match status" value="1"/>
</dbReference>
<dbReference type="NCBIfam" id="NF003520">
    <property type="entry name" value="PRK05183.1"/>
    <property type="match status" value="1"/>
</dbReference>
<dbReference type="NCBIfam" id="TIGR02350">
    <property type="entry name" value="prok_dnaK"/>
    <property type="match status" value="1"/>
</dbReference>
<dbReference type="PANTHER" id="PTHR19375">
    <property type="entry name" value="HEAT SHOCK PROTEIN 70KDA"/>
    <property type="match status" value="1"/>
</dbReference>
<dbReference type="Pfam" id="PF00012">
    <property type="entry name" value="HSP70"/>
    <property type="match status" value="1"/>
</dbReference>
<dbReference type="PRINTS" id="PR00301">
    <property type="entry name" value="HEATSHOCK70"/>
</dbReference>
<dbReference type="SUPFAM" id="SSF53067">
    <property type="entry name" value="Actin-like ATPase domain"/>
    <property type="match status" value="2"/>
</dbReference>
<dbReference type="SUPFAM" id="SSF100934">
    <property type="entry name" value="Heat shock protein 70kD (HSP70), C-terminal subdomain"/>
    <property type="match status" value="1"/>
</dbReference>
<dbReference type="SUPFAM" id="SSF100920">
    <property type="entry name" value="Heat shock protein 70kD (HSP70), peptide-binding domain"/>
    <property type="match status" value="1"/>
</dbReference>
<dbReference type="PROSITE" id="PS00297">
    <property type="entry name" value="HSP70_1"/>
    <property type="match status" value="1"/>
</dbReference>
<dbReference type="PROSITE" id="PS00329">
    <property type="entry name" value="HSP70_2"/>
    <property type="match status" value="1"/>
</dbReference>
<dbReference type="PROSITE" id="PS01036">
    <property type="entry name" value="HSP70_3"/>
    <property type="match status" value="1"/>
</dbReference>
<name>DNAK_BARBK</name>
<proteinExistence type="inferred from homology"/>
<keyword id="KW-0067">ATP-binding</keyword>
<keyword id="KW-0143">Chaperone</keyword>
<keyword id="KW-0547">Nucleotide-binding</keyword>
<keyword id="KW-0597">Phosphoprotein</keyword>
<keyword id="KW-0346">Stress response</keyword>
<comment type="function">
    <text evidence="1">Acts as a chaperone.</text>
</comment>
<comment type="induction">
    <text evidence="1">By stress conditions e.g. heat shock.</text>
</comment>
<comment type="similarity">
    <text evidence="1">Belongs to the heat shock protein 70 family.</text>
</comment>
<feature type="chain" id="PRO_1000059512" description="Chaperone protein DnaK">
    <location>
        <begin position="1"/>
        <end position="631"/>
    </location>
</feature>
<feature type="modified residue" description="Phosphothreonine; by autocatalysis" evidence="1">
    <location>
        <position position="198"/>
    </location>
</feature>
<accession>A1UUC3</accession>